<evidence type="ECO:0000255" key="1">
    <source>
        <dbReference type="HAMAP-Rule" id="MF_01659"/>
    </source>
</evidence>
<reference key="1">
    <citation type="journal article" date="2008" name="J. Bacteriol.">
        <title>Insights into the environmental resistance gene pool from the genome sequence of the multidrug-resistant environmental isolate Escherichia coli SMS-3-5.</title>
        <authorList>
            <person name="Fricke W.F."/>
            <person name="Wright M.S."/>
            <person name="Lindell A.H."/>
            <person name="Harkins D.M."/>
            <person name="Baker-Austin C."/>
            <person name="Ravel J."/>
            <person name="Stepanauskas R."/>
        </authorList>
    </citation>
    <scope>NUCLEOTIDE SEQUENCE [LARGE SCALE GENOMIC DNA]</scope>
    <source>
        <strain>SMS-3-5 / SECEC</strain>
    </source>
</reference>
<dbReference type="EC" id="2.2.1.9" evidence="1"/>
<dbReference type="EMBL" id="CP000970">
    <property type="protein sequence ID" value="ACB19231.1"/>
    <property type="molecule type" value="Genomic_DNA"/>
</dbReference>
<dbReference type="RefSeq" id="WP_012311923.1">
    <property type="nucleotide sequence ID" value="NC_010498.1"/>
</dbReference>
<dbReference type="SMR" id="B1LLL9"/>
<dbReference type="KEGG" id="ecm:EcSMS35_2419"/>
<dbReference type="HOGENOM" id="CLU_006051_3_0_6"/>
<dbReference type="UniPathway" id="UPA00079"/>
<dbReference type="UniPathway" id="UPA01057">
    <property type="reaction ID" value="UER00164"/>
</dbReference>
<dbReference type="Proteomes" id="UP000007011">
    <property type="component" value="Chromosome"/>
</dbReference>
<dbReference type="GO" id="GO:0070204">
    <property type="term" value="F:2-succinyl-5-enolpyruvyl-6-hydroxy-3-cyclohexene-1-carboxylic-acid synthase activity"/>
    <property type="evidence" value="ECO:0007669"/>
    <property type="project" value="UniProtKB-UniRule"/>
</dbReference>
<dbReference type="GO" id="GO:0000287">
    <property type="term" value="F:magnesium ion binding"/>
    <property type="evidence" value="ECO:0007669"/>
    <property type="project" value="UniProtKB-UniRule"/>
</dbReference>
<dbReference type="GO" id="GO:0030145">
    <property type="term" value="F:manganese ion binding"/>
    <property type="evidence" value="ECO:0007669"/>
    <property type="project" value="UniProtKB-UniRule"/>
</dbReference>
<dbReference type="GO" id="GO:0030976">
    <property type="term" value="F:thiamine pyrophosphate binding"/>
    <property type="evidence" value="ECO:0007669"/>
    <property type="project" value="UniProtKB-UniRule"/>
</dbReference>
<dbReference type="GO" id="GO:0009234">
    <property type="term" value="P:menaquinone biosynthetic process"/>
    <property type="evidence" value="ECO:0007669"/>
    <property type="project" value="UniProtKB-UniRule"/>
</dbReference>
<dbReference type="CDD" id="cd07037">
    <property type="entry name" value="TPP_PYR_MenD"/>
    <property type="match status" value="1"/>
</dbReference>
<dbReference type="CDD" id="cd02009">
    <property type="entry name" value="TPP_SHCHC_synthase"/>
    <property type="match status" value="1"/>
</dbReference>
<dbReference type="FunFam" id="3.40.50.1220:FF:000010">
    <property type="entry name" value="2-succinyl-5-enolpyruvyl-6-hydroxy-3-cyclohexene-1-carboxylate synthase"/>
    <property type="match status" value="1"/>
</dbReference>
<dbReference type="FunFam" id="3.40.50.970:FF:000029">
    <property type="entry name" value="2-succinyl-5-enolpyruvyl-6-hydroxy-3-cyclohexene-1-carboxylate synthase"/>
    <property type="match status" value="1"/>
</dbReference>
<dbReference type="Gene3D" id="3.40.50.970">
    <property type="match status" value="2"/>
</dbReference>
<dbReference type="Gene3D" id="3.40.50.1220">
    <property type="entry name" value="TPP-binding domain"/>
    <property type="match status" value="1"/>
</dbReference>
<dbReference type="HAMAP" id="MF_01659">
    <property type="entry name" value="MenD"/>
    <property type="match status" value="1"/>
</dbReference>
<dbReference type="InterPro" id="IPR004433">
    <property type="entry name" value="MenaQ_synth_MenD"/>
</dbReference>
<dbReference type="InterPro" id="IPR032264">
    <property type="entry name" value="MenD_middle"/>
</dbReference>
<dbReference type="InterPro" id="IPR029061">
    <property type="entry name" value="THDP-binding"/>
</dbReference>
<dbReference type="InterPro" id="IPR012001">
    <property type="entry name" value="Thiamin_PyroP_enz_TPP-bd_dom"/>
</dbReference>
<dbReference type="InterPro" id="IPR011766">
    <property type="entry name" value="TPP_enzyme_TPP-bd"/>
</dbReference>
<dbReference type="NCBIfam" id="TIGR00173">
    <property type="entry name" value="menD"/>
    <property type="match status" value="1"/>
</dbReference>
<dbReference type="PANTHER" id="PTHR42916">
    <property type="entry name" value="2-SUCCINYL-5-ENOLPYRUVYL-6-HYDROXY-3-CYCLOHEXENE-1-CARBOXYLATE SYNTHASE"/>
    <property type="match status" value="1"/>
</dbReference>
<dbReference type="PANTHER" id="PTHR42916:SF1">
    <property type="entry name" value="PROTEIN PHYLLO, CHLOROPLASTIC"/>
    <property type="match status" value="1"/>
</dbReference>
<dbReference type="Pfam" id="PF02775">
    <property type="entry name" value="TPP_enzyme_C"/>
    <property type="match status" value="1"/>
</dbReference>
<dbReference type="Pfam" id="PF16582">
    <property type="entry name" value="TPP_enzyme_M_2"/>
    <property type="match status" value="1"/>
</dbReference>
<dbReference type="Pfam" id="PF02776">
    <property type="entry name" value="TPP_enzyme_N"/>
    <property type="match status" value="1"/>
</dbReference>
<dbReference type="PIRSF" id="PIRSF004983">
    <property type="entry name" value="MenD"/>
    <property type="match status" value="1"/>
</dbReference>
<dbReference type="SUPFAM" id="SSF52518">
    <property type="entry name" value="Thiamin diphosphate-binding fold (THDP-binding)"/>
    <property type="match status" value="2"/>
</dbReference>
<feature type="chain" id="PRO_0000341739" description="2-succinyl-5-enolpyruvyl-6-hydroxy-3-cyclohexene-1-carboxylate synthase">
    <location>
        <begin position="1"/>
        <end position="556"/>
    </location>
</feature>
<comment type="function">
    <text evidence="1">Catalyzes the thiamine diphosphate-dependent decarboxylation of 2-oxoglutarate and the subsequent addition of the resulting succinic semialdehyde-thiamine pyrophosphate anion to isochorismate to yield 2-succinyl-5-enolpyruvyl-6-hydroxy-3-cyclohexene-1-carboxylate (SEPHCHC).</text>
</comment>
<comment type="catalytic activity">
    <reaction evidence="1">
        <text>isochorismate + 2-oxoglutarate + H(+) = 5-enolpyruvoyl-6-hydroxy-2-succinyl-cyclohex-3-ene-1-carboxylate + CO2</text>
        <dbReference type="Rhea" id="RHEA:25593"/>
        <dbReference type="ChEBI" id="CHEBI:15378"/>
        <dbReference type="ChEBI" id="CHEBI:16526"/>
        <dbReference type="ChEBI" id="CHEBI:16810"/>
        <dbReference type="ChEBI" id="CHEBI:29780"/>
        <dbReference type="ChEBI" id="CHEBI:58818"/>
        <dbReference type="EC" id="2.2.1.9"/>
    </reaction>
</comment>
<comment type="cofactor">
    <cofactor evidence="1">
        <name>Mg(2+)</name>
        <dbReference type="ChEBI" id="CHEBI:18420"/>
    </cofactor>
    <cofactor evidence="1">
        <name>Mn(2+)</name>
        <dbReference type="ChEBI" id="CHEBI:29035"/>
    </cofactor>
</comment>
<comment type="cofactor">
    <cofactor evidence="1">
        <name>thiamine diphosphate</name>
        <dbReference type="ChEBI" id="CHEBI:58937"/>
    </cofactor>
    <text evidence="1">Binds 1 thiamine pyrophosphate per subunit.</text>
</comment>
<comment type="pathway">
    <text evidence="1">Quinol/quinone metabolism; 1,4-dihydroxy-2-naphthoate biosynthesis; 1,4-dihydroxy-2-naphthoate from chorismate: step 2/7.</text>
</comment>
<comment type="pathway">
    <text evidence="1">Quinol/quinone metabolism; menaquinone biosynthesis.</text>
</comment>
<comment type="subunit">
    <text evidence="1">Homodimer.</text>
</comment>
<comment type="similarity">
    <text evidence="1">Belongs to the TPP enzyme family. MenD subfamily.</text>
</comment>
<name>MEND_ECOSM</name>
<keyword id="KW-0460">Magnesium</keyword>
<keyword id="KW-0464">Manganese</keyword>
<keyword id="KW-0474">Menaquinone biosynthesis</keyword>
<keyword id="KW-0479">Metal-binding</keyword>
<keyword id="KW-0786">Thiamine pyrophosphate</keyword>
<keyword id="KW-0808">Transferase</keyword>
<gene>
    <name evidence="1" type="primary">menD</name>
    <name type="ordered locus">EcSMS35_2419</name>
</gene>
<accession>B1LLL9</accession>
<sequence>MSVSAFNRRWAAVILEALTRQGVRHICIAPGSRSTPLTLAAAENSAFIHHTHFDERGLGHLALGLAKVSKQPVAVIVTSGTAVANLYPALIEAGLTGEKLILLTADRPPELIDCGANQAIRQPGMFASHPTHSISLPRPTQDIPARWLVSTIDHALGTLHAGGVHINCPFAEPLYGEMDDTGLSWQQRLGDWWQDDKPWLREAPRLESEKQRDWFFWRQKRGVVVAGRMSAEEGKKVALWAQTLGWPLIGDVLSQTGQPLPCADLWLGNAKATSELQQAQIVVQLGSSLTGKRLLQWQASCEPEEYWIVDDIEGRLDPAHHRGRRLIANIADWLEQHPAEKRQPWCVEIPRLAEQAMQAVIARRDAFGEAQLAHRISDYLPEQGQLFVGNSLVVRLIDALSQLPAGYPVYSNRGASGIDGLLSTAAGVQRASGKPTLAIVGDLSALYDLNALALLRQVSAPLVLIVVNNNGGQIFSLLPTPKNERERFYLMPQNVHFEHAAAMFELKYHRPQNWQELETALVDAWRTPTTTVIEMVVNDTDGAQTLQQLLAQVSHL</sequence>
<protein>
    <recommendedName>
        <fullName evidence="1">2-succinyl-5-enolpyruvyl-6-hydroxy-3-cyclohexene-1-carboxylate synthase</fullName>
        <shortName evidence="1">SEPHCHC synthase</shortName>
        <ecNumber evidence="1">2.2.1.9</ecNumber>
    </recommendedName>
    <alternativeName>
        <fullName evidence="1">Menaquinone biosynthesis protein MenD</fullName>
    </alternativeName>
</protein>
<proteinExistence type="inferred from homology"/>
<organism>
    <name type="scientific">Escherichia coli (strain SMS-3-5 / SECEC)</name>
    <dbReference type="NCBI Taxonomy" id="439855"/>
    <lineage>
        <taxon>Bacteria</taxon>
        <taxon>Pseudomonadati</taxon>
        <taxon>Pseudomonadota</taxon>
        <taxon>Gammaproteobacteria</taxon>
        <taxon>Enterobacterales</taxon>
        <taxon>Enterobacteriaceae</taxon>
        <taxon>Escherichia</taxon>
    </lineage>
</organism>